<protein>
    <recommendedName>
        <fullName evidence="1">Methylglyoxal synthase</fullName>
        <shortName evidence="1">MGS</shortName>
        <ecNumber evidence="1">4.2.3.3</ecNumber>
    </recommendedName>
</protein>
<evidence type="ECO:0000255" key="1">
    <source>
        <dbReference type="HAMAP-Rule" id="MF_00549"/>
    </source>
</evidence>
<comment type="function">
    <text evidence="1">Catalyzes the formation of methylglyoxal from dihydroxyacetone phosphate.</text>
</comment>
<comment type="catalytic activity">
    <reaction evidence="1">
        <text>dihydroxyacetone phosphate = methylglyoxal + phosphate</text>
        <dbReference type="Rhea" id="RHEA:17937"/>
        <dbReference type="ChEBI" id="CHEBI:17158"/>
        <dbReference type="ChEBI" id="CHEBI:43474"/>
        <dbReference type="ChEBI" id="CHEBI:57642"/>
        <dbReference type="EC" id="4.2.3.3"/>
    </reaction>
</comment>
<comment type="similarity">
    <text evidence="1">Belongs to the methylglyoxal synthase family.</text>
</comment>
<dbReference type="EC" id="4.2.3.3" evidence="1"/>
<dbReference type="EMBL" id="AL596170">
    <property type="protein sequence ID" value="CAC97250.1"/>
    <property type="molecule type" value="Genomic_DNA"/>
</dbReference>
<dbReference type="PIR" id="AB1685">
    <property type="entry name" value="AB1685"/>
</dbReference>
<dbReference type="RefSeq" id="WP_003769411.1">
    <property type="nucleotide sequence ID" value="NC_003212.1"/>
</dbReference>
<dbReference type="SMR" id="Q92AA2"/>
<dbReference type="STRING" id="272626.gene:17566378"/>
<dbReference type="GeneID" id="93235358"/>
<dbReference type="KEGG" id="lin:lin2020"/>
<dbReference type="eggNOG" id="COG1803">
    <property type="taxonomic scope" value="Bacteria"/>
</dbReference>
<dbReference type="HOGENOM" id="CLU_120420_1_0_9"/>
<dbReference type="OrthoDB" id="9787147at2"/>
<dbReference type="Proteomes" id="UP000002513">
    <property type="component" value="Chromosome"/>
</dbReference>
<dbReference type="GO" id="GO:0005829">
    <property type="term" value="C:cytosol"/>
    <property type="evidence" value="ECO:0007669"/>
    <property type="project" value="TreeGrafter"/>
</dbReference>
<dbReference type="GO" id="GO:0008929">
    <property type="term" value="F:methylglyoxal synthase activity"/>
    <property type="evidence" value="ECO:0007669"/>
    <property type="project" value="UniProtKB-UniRule"/>
</dbReference>
<dbReference type="GO" id="GO:0019242">
    <property type="term" value="P:methylglyoxal biosynthetic process"/>
    <property type="evidence" value="ECO:0007669"/>
    <property type="project" value="UniProtKB-UniRule"/>
</dbReference>
<dbReference type="CDD" id="cd01422">
    <property type="entry name" value="MGS"/>
    <property type="match status" value="1"/>
</dbReference>
<dbReference type="FunFam" id="3.40.50.1380:FF:000006">
    <property type="entry name" value="Methylglyoxal synthase"/>
    <property type="match status" value="1"/>
</dbReference>
<dbReference type="Gene3D" id="3.40.50.1380">
    <property type="entry name" value="Methylglyoxal synthase-like domain"/>
    <property type="match status" value="1"/>
</dbReference>
<dbReference type="HAMAP" id="MF_00549">
    <property type="entry name" value="Methylglyoxal_synth"/>
    <property type="match status" value="1"/>
</dbReference>
<dbReference type="InterPro" id="IPR004363">
    <property type="entry name" value="Methylgl_synth"/>
</dbReference>
<dbReference type="InterPro" id="IPR018148">
    <property type="entry name" value="Methylglyoxal_synth_AS"/>
</dbReference>
<dbReference type="InterPro" id="IPR011607">
    <property type="entry name" value="MGS-like_dom"/>
</dbReference>
<dbReference type="InterPro" id="IPR036914">
    <property type="entry name" value="MGS-like_dom_sf"/>
</dbReference>
<dbReference type="NCBIfam" id="TIGR00160">
    <property type="entry name" value="MGSA"/>
    <property type="match status" value="1"/>
</dbReference>
<dbReference type="NCBIfam" id="NF003559">
    <property type="entry name" value="PRK05234.1"/>
    <property type="match status" value="1"/>
</dbReference>
<dbReference type="PANTHER" id="PTHR30492">
    <property type="entry name" value="METHYLGLYOXAL SYNTHASE"/>
    <property type="match status" value="1"/>
</dbReference>
<dbReference type="PANTHER" id="PTHR30492:SF0">
    <property type="entry name" value="METHYLGLYOXAL SYNTHASE"/>
    <property type="match status" value="1"/>
</dbReference>
<dbReference type="Pfam" id="PF02142">
    <property type="entry name" value="MGS"/>
    <property type="match status" value="1"/>
</dbReference>
<dbReference type="PIRSF" id="PIRSF006614">
    <property type="entry name" value="Methylglyox_syn"/>
    <property type="match status" value="1"/>
</dbReference>
<dbReference type="SMART" id="SM00851">
    <property type="entry name" value="MGS"/>
    <property type="match status" value="1"/>
</dbReference>
<dbReference type="SUPFAM" id="SSF52335">
    <property type="entry name" value="Methylglyoxal synthase-like"/>
    <property type="match status" value="1"/>
</dbReference>
<dbReference type="PROSITE" id="PS01335">
    <property type="entry name" value="METHYLGLYOXAL_SYNTH"/>
    <property type="match status" value="1"/>
</dbReference>
<dbReference type="PROSITE" id="PS51855">
    <property type="entry name" value="MGS"/>
    <property type="match status" value="1"/>
</dbReference>
<feature type="chain" id="PRO_0000178634" description="Methylglyoxal synthase">
    <location>
        <begin position="1"/>
        <end position="134"/>
    </location>
</feature>
<feature type="domain" description="MGS-like" evidence="1">
    <location>
        <begin position="1"/>
        <end position="134"/>
    </location>
</feature>
<feature type="active site" description="Proton donor/acceptor" evidence="1">
    <location>
        <position position="60"/>
    </location>
</feature>
<feature type="binding site" evidence="1">
    <location>
        <position position="8"/>
    </location>
    <ligand>
        <name>substrate</name>
    </ligand>
</feature>
<feature type="binding site" evidence="1">
    <location>
        <position position="12"/>
    </location>
    <ligand>
        <name>substrate</name>
    </ligand>
</feature>
<feature type="binding site" evidence="1">
    <location>
        <begin position="34"/>
        <end position="37"/>
    </location>
    <ligand>
        <name>substrate</name>
    </ligand>
</feature>
<feature type="binding site" evidence="1">
    <location>
        <begin position="54"/>
        <end position="55"/>
    </location>
    <ligand>
        <name>substrate</name>
    </ligand>
</feature>
<feature type="binding site" evidence="1">
    <location>
        <position position="87"/>
    </location>
    <ligand>
        <name>substrate</name>
    </ligand>
</feature>
<reference key="1">
    <citation type="journal article" date="2001" name="Science">
        <title>Comparative genomics of Listeria species.</title>
        <authorList>
            <person name="Glaser P."/>
            <person name="Frangeul L."/>
            <person name="Buchrieser C."/>
            <person name="Rusniok C."/>
            <person name="Amend A."/>
            <person name="Baquero F."/>
            <person name="Berche P."/>
            <person name="Bloecker H."/>
            <person name="Brandt P."/>
            <person name="Chakraborty T."/>
            <person name="Charbit A."/>
            <person name="Chetouani F."/>
            <person name="Couve E."/>
            <person name="de Daruvar A."/>
            <person name="Dehoux P."/>
            <person name="Domann E."/>
            <person name="Dominguez-Bernal G."/>
            <person name="Duchaud E."/>
            <person name="Durant L."/>
            <person name="Dussurget O."/>
            <person name="Entian K.-D."/>
            <person name="Fsihi H."/>
            <person name="Garcia-del Portillo F."/>
            <person name="Garrido P."/>
            <person name="Gautier L."/>
            <person name="Goebel W."/>
            <person name="Gomez-Lopez N."/>
            <person name="Hain T."/>
            <person name="Hauf J."/>
            <person name="Jackson D."/>
            <person name="Jones L.-M."/>
            <person name="Kaerst U."/>
            <person name="Kreft J."/>
            <person name="Kuhn M."/>
            <person name="Kunst F."/>
            <person name="Kurapkat G."/>
            <person name="Madueno E."/>
            <person name="Maitournam A."/>
            <person name="Mata Vicente J."/>
            <person name="Ng E."/>
            <person name="Nedjari H."/>
            <person name="Nordsiek G."/>
            <person name="Novella S."/>
            <person name="de Pablos B."/>
            <person name="Perez-Diaz J.-C."/>
            <person name="Purcell R."/>
            <person name="Remmel B."/>
            <person name="Rose M."/>
            <person name="Schlueter T."/>
            <person name="Simoes N."/>
            <person name="Tierrez A."/>
            <person name="Vazquez-Boland J.-A."/>
            <person name="Voss H."/>
            <person name="Wehland J."/>
            <person name="Cossart P."/>
        </authorList>
    </citation>
    <scope>NUCLEOTIDE SEQUENCE [LARGE SCALE GENOMIC DNA]</scope>
    <source>
        <strain>ATCC BAA-680 / CLIP 11262</strain>
    </source>
</reference>
<keyword id="KW-0456">Lyase</keyword>
<proteinExistence type="inferred from homology"/>
<name>MGSA_LISIN</name>
<organism>
    <name type="scientific">Listeria innocua serovar 6a (strain ATCC BAA-680 / CLIP 11262)</name>
    <dbReference type="NCBI Taxonomy" id="272626"/>
    <lineage>
        <taxon>Bacteria</taxon>
        <taxon>Bacillati</taxon>
        <taxon>Bacillota</taxon>
        <taxon>Bacilli</taxon>
        <taxon>Bacillales</taxon>
        <taxon>Listeriaceae</taxon>
        <taxon>Listeria</taxon>
    </lineage>
</organism>
<accession>Q92AA2</accession>
<sequence>MHIALIAHDEKKDLMVGFATAYKHLLEPHQLYATGTTGLRIIEATGLTVHRFKSGPLGGDQQIGARISENKMDLVIFLRDPLTAQPHEPDVSALIRLCDVYEIPLATNIGTAEILIRGLGAGFLDWRDLRRNDE</sequence>
<gene>
    <name evidence="1" type="primary">mgsA</name>
    <name type="ordered locus">lin2020</name>
</gene>